<protein>
    <recommendedName>
        <fullName evidence="1">Small ribosomal subunit protein bS20</fullName>
    </recommendedName>
    <alternativeName>
        <fullName evidence="2">30S ribosomal protein S20</fullName>
    </alternativeName>
</protein>
<accession>Q99TR3</accession>
<reference key="1">
    <citation type="journal article" date="2001" name="Lancet">
        <title>Whole genome sequencing of meticillin-resistant Staphylococcus aureus.</title>
        <authorList>
            <person name="Kuroda M."/>
            <person name="Ohta T."/>
            <person name="Uchiyama I."/>
            <person name="Baba T."/>
            <person name="Yuzawa H."/>
            <person name="Kobayashi I."/>
            <person name="Cui L."/>
            <person name="Oguchi A."/>
            <person name="Aoki K."/>
            <person name="Nagai Y."/>
            <person name="Lian J.-Q."/>
            <person name="Ito T."/>
            <person name="Kanamori M."/>
            <person name="Matsumaru H."/>
            <person name="Maruyama A."/>
            <person name="Murakami H."/>
            <person name="Hosoyama A."/>
            <person name="Mizutani-Ui Y."/>
            <person name="Takahashi N.K."/>
            <person name="Sawano T."/>
            <person name="Inoue R."/>
            <person name="Kaito C."/>
            <person name="Sekimizu K."/>
            <person name="Hirakawa H."/>
            <person name="Kuhara S."/>
            <person name="Goto S."/>
            <person name="Yabuzaki J."/>
            <person name="Kanehisa M."/>
            <person name="Yamashita A."/>
            <person name="Oshima K."/>
            <person name="Furuya K."/>
            <person name="Yoshino C."/>
            <person name="Shiba T."/>
            <person name="Hattori M."/>
            <person name="Ogasawara N."/>
            <person name="Hayashi H."/>
            <person name="Hiramatsu K."/>
        </authorList>
    </citation>
    <scope>NUCLEOTIDE SEQUENCE [LARGE SCALE GENOMIC DNA]</scope>
    <source>
        <strain>Mu50 / ATCC 700699</strain>
    </source>
</reference>
<evidence type="ECO:0000255" key="1">
    <source>
        <dbReference type="HAMAP-Rule" id="MF_00500"/>
    </source>
</evidence>
<evidence type="ECO:0000305" key="2"/>
<name>RS20_STAAM</name>
<dbReference type="EMBL" id="BA000017">
    <property type="protein sequence ID" value="BAB57748.1"/>
    <property type="molecule type" value="Genomic_DNA"/>
</dbReference>
<dbReference type="RefSeq" id="WP_001274017.1">
    <property type="nucleotide sequence ID" value="NC_002758.2"/>
</dbReference>
<dbReference type="SMR" id="Q99TR3"/>
<dbReference type="GeneID" id="66839775"/>
<dbReference type="KEGG" id="sav:SAV1586"/>
<dbReference type="HOGENOM" id="CLU_160655_1_1_9"/>
<dbReference type="PhylomeDB" id="Q99TR3"/>
<dbReference type="Proteomes" id="UP000002481">
    <property type="component" value="Chromosome"/>
</dbReference>
<dbReference type="GO" id="GO:0005829">
    <property type="term" value="C:cytosol"/>
    <property type="evidence" value="ECO:0007669"/>
    <property type="project" value="TreeGrafter"/>
</dbReference>
<dbReference type="GO" id="GO:0015935">
    <property type="term" value="C:small ribosomal subunit"/>
    <property type="evidence" value="ECO:0007669"/>
    <property type="project" value="TreeGrafter"/>
</dbReference>
<dbReference type="GO" id="GO:0070181">
    <property type="term" value="F:small ribosomal subunit rRNA binding"/>
    <property type="evidence" value="ECO:0007669"/>
    <property type="project" value="TreeGrafter"/>
</dbReference>
<dbReference type="GO" id="GO:0003735">
    <property type="term" value="F:structural constituent of ribosome"/>
    <property type="evidence" value="ECO:0007669"/>
    <property type="project" value="InterPro"/>
</dbReference>
<dbReference type="GO" id="GO:0006412">
    <property type="term" value="P:translation"/>
    <property type="evidence" value="ECO:0007669"/>
    <property type="project" value="UniProtKB-UniRule"/>
</dbReference>
<dbReference type="Gene3D" id="1.20.58.110">
    <property type="entry name" value="Ribosomal protein S20"/>
    <property type="match status" value="1"/>
</dbReference>
<dbReference type="HAMAP" id="MF_00500">
    <property type="entry name" value="Ribosomal_bS20"/>
    <property type="match status" value="1"/>
</dbReference>
<dbReference type="InterPro" id="IPR002583">
    <property type="entry name" value="Ribosomal_bS20"/>
</dbReference>
<dbReference type="InterPro" id="IPR036510">
    <property type="entry name" value="Ribosomal_bS20_sf"/>
</dbReference>
<dbReference type="NCBIfam" id="TIGR00029">
    <property type="entry name" value="S20"/>
    <property type="match status" value="1"/>
</dbReference>
<dbReference type="PANTHER" id="PTHR33398">
    <property type="entry name" value="30S RIBOSOMAL PROTEIN S20"/>
    <property type="match status" value="1"/>
</dbReference>
<dbReference type="PANTHER" id="PTHR33398:SF1">
    <property type="entry name" value="SMALL RIBOSOMAL SUBUNIT PROTEIN BS20C"/>
    <property type="match status" value="1"/>
</dbReference>
<dbReference type="Pfam" id="PF01649">
    <property type="entry name" value="Ribosomal_S20p"/>
    <property type="match status" value="1"/>
</dbReference>
<dbReference type="SUPFAM" id="SSF46992">
    <property type="entry name" value="Ribosomal protein S20"/>
    <property type="match status" value="1"/>
</dbReference>
<gene>
    <name evidence="1" type="primary">rpsT</name>
    <name type="ordered locus">SAV1586</name>
</gene>
<proteinExistence type="inferred from homology"/>
<keyword id="KW-0687">Ribonucleoprotein</keyword>
<keyword id="KW-0689">Ribosomal protein</keyword>
<keyword id="KW-0694">RNA-binding</keyword>
<keyword id="KW-0699">rRNA-binding</keyword>
<sequence>MANIKSAIKRVKTTEKAEARNISQKSAMRTAVKNAKTAVSNNADNKNELVSLAVKLVDKAAQSNLIHSNKADRIKSQLMTANK</sequence>
<comment type="function">
    <text evidence="1">Binds directly to 16S ribosomal RNA.</text>
</comment>
<comment type="similarity">
    <text evidence="1">Belongs to the bacterial ribosomal protein bS20 family.</text>
</comment>
<organism>
    <name type="scientific">Staphylococcus aureus (strain Mu50 / ATCC 700699)</name>
    <dbReference type="NCBI Taxonomy" id="158878"/>
    <lineage>
        <taxon>Bacteria</taxon>
        <taxon>Bacillati</taxon>
        <taxon>Bacillota</taxon>
        <taxon>Bacilli</taxon>
        <taxon>Bacillales</taxon>
        <taxon>Staphylococcaceae</taxon>
        <taxon>Staphylococcus</taxon>
    </lineage>
</organism>
<feature type="chain" id="PRO_0000224949" description="Small ribosomal subunit protein bS20">
    <location>
        <begin position="1"/>
        <end position="83"/>
    </location>
</feature>